<keyword id="KW-0028">Amino-acid biosynthesis</keyword>
<keyword id="KW-0100">Branched-chain amino acid biosynthesis</keyword>
<keyword id="KW-0460">Magnesium</keyword>
<keyword id="KW-0479">Metal-binding</keyword>
<keyword id="KW-0521">NADP</keyword>
<keyword id="KW-0560">Oxidoreductase</keyword>
<reference key="1">
    <citation type="journal article" date="2003" name="Nat. Genet.">
        <title>Comparative analysis of the genome sequences of Bordetella pertussis, Bordetella parapertussis and Bordetella bronchiseptica.</title>
        <authorList>
            <person name="Parkhill J."/>
            <person name="Sebaihia M."/>
            <person name="Preston A."/>
            <person name="Murphy L.D."/>
            <person name="Thomson N.R."/>
            <person name="Harris D.E."/>
            <person name="Holden M.T.G."/>
            <person name="Churcher C.M."/>
            <person name="Bentley S.D."/>
            <person name="Mungall K.L."/>
            <person name="Cerdeno-Tarraga A.-M."/>
            <person name="Temple L."/>
            <person name="James K.D."/>
            <person name="Harris B."/>
            <person name="Quail M.A."/>
            <person name="Achtman M."/>
            <person name="Atkin R."/>
            <person name="Baker S."/>
            <person name="Basham D."/>
            <person name="Bason N."/>
            <person name="Cherevach I."/>
            <person name="Chillingworth T."/>
            <person name="Collins M."/>
            <person name="Cronin A."/>
            <person name="Davis P."/>
            <person name="Doggett J."/>
            <person name="Feltwell T."/>
            <person name="Goble A."/>
            <person name="Hamlin N."/>
            <person name="Hauser H."/>
            <person name="Holroyd S."/>
            <person name="Jagels K."/>
            <person name="Leather S."/>
            <person name="Moule S."/>
            <person name="Norberczak H."/>
            <person name="O'Neil S."/>
            <person name="Ormond D."/>
            <person name="Price C."/>
            <person name="Rabbinowitsch E."/>
            <person name="Rutter S."/>
            <person name="Sanders M."/>
            <person name="Saunders D."/>
            <person name="Seeger K."/>
            <person name="Sharp S."/>
            <person name="Simmonds M."/>
            <person name="Skelton J."/>
            <person name="Squares R."/>
            <person name="Squares S."/>
            <person name="Stevens K."/>
            <person name="Unwin L."/>
            <person name="Whitehead S."/>
            <person name="Barrell B.G."/>
            <person name="Maskell D.J."/>
        </authorList>
    </citation>
    <scope>NUCLEOTIDE SEQUENCE [LARGE SCALE GENOMIC DNA]</scope>
    <source>
        <strain>12822 / ATCC BAA-587 / NCTC 13253</strain>
    </source>
</reference>
<gene>
    <name evidence="1" type="primary">ilvC</name>
    <name type="ordered locus">BPP3435</name>
</gene>
<feature type="chain" id="PRO_0000151281" description="Ketol-acid reductoisomerase (NADP(+))">
    <location>
        <begin position="1"/>
        <end position="338"/>
    </location>
</feature>
<feature type="domain" description="KARI N-terminal Rossmann" evidence="2">
    <location>
        <begin position="1"/>
        <end position="181"/>
    </location>
</feature>
<feature type="domain" description="KARI C-terminal knotted" evidence="3">
    <location>
        <begin position="182"/>
        <end position="327"/>
    </location>
</feature>
<feature type="active site" evidence="1">
    <location>
        <position position="107"/>
    </location>
</feature>
<feature type="binding site" evidence="1">
    <location>
        <begin position="24"/>
        <end position="27"/>
    </location>
    <ligand>
        <name>NADP(+)</name>
        <dbReference type="ChEBI" id="CHEBI:58349"/>
    </ligand>
</feature>
<feature type="binding site" evidence="1">
    <location>
        <position position="47"/>
    </location>
    <ligand>
        <name>NADP(+)</name>
        <dbReference type="ChEBI" id="CHEBI:58349"/>
    </ligand>
</feature>
<feature type="binding site" evidence="1">
    <location>
        <position position="52"/>
    </location>
    <ligand>
        <name>NADP(+)</name>
        <dbReference type="ChEBI" id="CHEBI:58349"/>
    </ligand>
</feature>
<feature type="binding site" evidence="1">
    <location>
        <position position="133"/>
    </location>
    <ligand>
        <name>NADP(+)</name>
        <dbReference type="ChEBI" id="CHEBI:58349"/>
    </ligand>
</feature>
<feature type="binding site" evidence="1">
    <location>
        <position position="190"/>
    </location>
    <ligand>
        <name>Mg(2+)</name>
        <dbReference type="ChEBI" id="CHEBI:18420"/>
        <label>1</label>
    </ligand>
</feature>
<feature type="binding site" evidence="1">
    <location>
        <position position="190"/>
    </location>
    <ligand>
        <name>Mg(2+)</name>
        <dbReference type="ChEBI" id="CHEBI:18420"/>
        <label>2</label>
    </ligand>
</feature>
<feature type="binding site" evidence="1">
    <location>
        <position position="194"/>
    </location>
    <ligand>
        <name>Mg(2+)</name>
        <dbReference type="ChEBI" id="CHEBI:18420"/>
        <label>1</label>
    </ligand>
</feature>
<feature type="binding site" evidence="1">
    <location>
        <position position="226"/>
    </location>
    <ligand>
        <name>Mg(2+)</name>
        <dbReference type="ChEBI" id="CHEBI:18420"/>
        <label>2</label>
    </ligand>
</feature>
<feature type="binding site" evidence="1">
    <location>
        <position position="230"/>
    </location>
    <ligand>
        <name>Mg(2+)</name>
        <dbReference type="ChEBI" id="CHEBI:18420"/>
        <label>2</label>
    </ligand>
</feature>
<feature type="binding site" evidence="1">
    <location>
        <position position="251"/>
    </location>
    <ligand>
        <name>substrate</name>
    </ligand>
</feature>
<dbReference type="EC" id="1.1.1.86" evidence="1"/>
<dbReference type="EMBL" id="BX640433">
    <property type="protein sequence ID" value="CAE38720.1"/>
    <property type="molecule type" value="Genomic_DNA"/>
</dbReference>
<dbReference type="RefSeq" id="WP_003814005.1">
    <property type="nucleotide sequence ID" value="NC_002928.3"/>
</dbReference>
<dbReference type="SMR" id="Q7W566"/>
<dbReference type="GeneID" id="93205220"/>
<dbReference type="KEGG" id="bpa:BPP3435"/>
<dbReference type="HOGENOM" id="CLU_033821_0_1_4"/>
<dbReference type="UniPathway" id="UPA00047">
    <property type="reaction ID" value="UER00056"/>
</dbReference>
<dbReference type="UniPathway" id="UPA00049">
    <property type="reaction ID" value="UER00060"/>
</dbReference>
<dbReference type="Proteomes" id="UP000001421">
    <property type="component" value="Chromosome"/>
</dbReference>
<dbReference type="GO" id="GO:0005829">
    <property type="term" value="C:cytosol"/>
    <property type="evidence" value="ECO:0007669"/>
    <property type="project" value="TreeGrafter"/>
</dbReference>
<dbReference type="GO" id="GO:0004455">
    <property type="term" value="F:ketol-acid reductoisomerase activity"/>
    <property type="evidence" value="ECO:0007669"/>
    <property type="project" value="UniProtKB-UniRule"/>
</dbReference>
<dbReference type="GO" id="GO:0000287">
    <property type="term" value="F:magnesium ion binding"/>
    <property type="evidence" value="ECO:0007669"/>
    <property type="project" value="UniProtKB-UniRule"/>
</dbReference>
<dbReference type="GO" id="GO:0050661">
    <property type="term" value="F:NADP binding"/>
    <property type="evidence" value="ECO:0007669"/>
    <property type="project" value="InterPro"/>
</dbReference>
<dbReference type="GO" id="GO:0009097">
    <property type="term" value="P:isoleucine biosynthetic process"/>
    <property type="evidence" value="ECO:0007669"/>
    <property type="project" value="UniProtKB-UniRule"/>
</dbReference>
<dbReference type="GO" id="GO:0009099">
    <property type="term" value="P:L-valine biosynthetic process"/>
    <property type="evidence" value="ECO:0007669"/>
    <property type="project" value="UniProtKB-UniRule"/>
</dbReference>
<dbReference type="FunFam" id="3.40.50.720:FF:000023">
    <property type="entry name" value="Ketol-acid reductoisomerase (NADP(+))"/>
    <property type="match status" value="1"/>
</dbReference>
<dbReference type="Gene3D" id="6.10.240.10">
    <property type="match status" value="1"/>
</dbReference>
<dbReference type="Gene3D" id="3.40.50.720">
    <property type="entry name" value="NAD(P)-binding Rossmann-like Domain"/>
    <property type="match status" value="1"/>
</dbReference>
<dbReference type="HAMAP" id="MF_00435">
    <property type="entry name" value="IlvC"/>
    <property type="match status" value="1"/>
</dbReference>
<dbReference type="InterPro" id="IPR008927">
    <property type="entry name" value="6-PGluconate_DH-like_C_sf"/>
</dbReference>
<dbReference type="InterPro" id="IPR013023">
    <property type="entry name" value="KARI"/>
</dbReference>
<dbReference type="InterPro" id="IPR000506">
    <property type="entry name" value="KARI_C"/>
</dbReference>
<dbReference type="InterPro" id="IPR013116">
    <property type="entry name" value="KARI_N"/>
</dbReference>
<dbReference type="InterPro" id="IPR014359">
    <property type="entry name" value="KARI_prok"/>
</dbReference>
<dbReference type="InterPro" id="IPR036291">
    <property type="entry name" value="NAD(P)-bd_dom_sf"/>
</dbReference>
<dbReference type="NCBIfam" id="TIGR00465">
    <property type="entry name" value="ilvC"/>
    <property type="match status" value="1"/>
</dbReference>
<dbReference type="NCBIfam" id="NF004017">
    <property type="entry name" value="PRK05479.1"/>
    <property type="match status" value="1"/>
</dbReference>
<dbReference type="NCBIfam" id="NF009940">
    <property type="entry name" value="PRK13403.1"/>
    <property type="match status" value="1"/>
</dbReference>
<dbReference type="PANTHER" id="PTHR21371">
    <property type="entry name" value="KETOL-ACID REDUCTOISOMERASE, MITOCHONDRIAL"/>
    <property type="match status" value="1"/>
</dbReference>
<dbReference type="PANTHER" id="PTHR21371:SF1">
    <property type="entry name" value="KETOL-ACID REDUCTOISOMERASE, MITOCHONDRIAL"/>
    <property type="match status" value="1"/>
</dbReference>
<dbReference type="Pfam" id="PF01450">
    <property type="entry name" value="KARI_C"/>
    <property type="match status" value="1"/>
</dbReference>
<dbReference type="Pfam" id="PF07991">
    <property type="entry name" value="KARI_N"/>
    <property type="match status" value="1"/>
</dbReference>
<dbReference type="PIRSF" id="PIRSF000116">
    <property type="entry name" value="IlvC_gammaproteo"/>
    <property type="match status" value="1"/>
</dbReference>
<dbReference type="SUPFAM" id="SSF48179">
    <property type="entry name" value="6-phosphogluconate dehydrogenase C-terminal domain-like"/>
    <property type="match status" value="1"/>
</dbReference>
<dbReference type="SUPFAM" id="SSF51735">
    <property type="entry name" value="NAD(P)-binding Rossmann-fold domains"/>
    <property type="match status" value="1"/>
</dbReference>
<dbReference type="PROSITE" id="PS51851">
    <property type="entry name" value="KARI_C"/>
    <property type="match status" value="1"/>
</dbReference>
<dbReference type="PROSITE" id="PS51850">
    <property type="entry name" value="KARI_N"/>
    <property type="match status" value="1"/>
</dbReference>
<evidence type="ECO:0000255" key="1">
    <source>
        <dbReference type="HAMAP-Rule" id="MF_00435"/>
    </source>
</evidence>
<evidence type="ECO:0000255" key="2">
    <source>
        <dbReference type="PROSITE-ProRule" id="PRU01197"/>
    </source>
</evidence>
<evidence type="ECO:0000255" key="3">
    <source>
        <dbReference type="PROSITE-ProRule" id="PRU01198"/>
    </source>
</evidence>
<sequence length="338" mass="36234">MKVFYDKDCDLSLVKGKTVAIIGYGSQGHAHALNLHDSGVKVVVGLRKGGASWNKAANAGLEVAEVAEAVKRADIVMMLLPDENIAAVYRDEVHANIKAGAALAFAHGFNVHYGQVVPREDIDVIMVAPKAPGHTVRSTYSQGGGVPHLIAVYQDKSGSARDVALSYASANGGGRAGIIETNFREETETDLFGEQAVLCGGTVELIKAGFDTLVEAGYAPEMAYFECLHELKLIVDLIYEGGIANMNYSISNNAEFGEYETGPKVVTDATRQAMRECLTAIQTGEYAKKFILENAAGAPTLTSRRRINAESQIEQVGGKLRAMMPWIAANKLVDKAKN</sequence>
<comment type="function">
    <text evidence="1">Involved in the biosynthesis of branched-chain amino acids (BCAA). Catalyzes an alkyl-migration followed by a ketol-acid reduction of (S)-2-acetolactate (S2AL) to yield (R)-2,3-dihydroxy-isovalerate. In the isomerase reaction, S2AL is rearranged via a Mg-dependent methyl migration to produce 3-hydroxy-3-methyl-2-ketobutyrate (HMKB). In the reductase reaction, this 2-ketoacid undergoes a metal-dependent reduction by NADPH to yield (R)-2,3-dihydroxy-isovalerate.</text>
</comment>
<comment type="catalytic activity">
    <reaction evidence="1">
        <text>(2R)-2,3-dihydroxy-3-methylbutanoate + NADP(+) = (2S)-2-acetolactate + NADPH + H(+)</text>
        <dbReference type="Rhea" id="RHEA:22068"/>
        <dbReference type="ChEBI" id="CHEBI:15378"/>
        <dbReference type="ChEBI" id="CHEBI:49072"/>
        <dbReference type="ChEBI" id="CHEBI:57783"/>
        <dbReference type="ChEBI" id="CHEBI:58349"/>
        <dbReference type="ChEBI" id="CHEBI:58476"/>
        <dbReference type="EC" id="1.1.1.86"/>
    </reaction>
</comment>
<comment type="catalytic activity">
    <reaction evidence="1">
        <text>(2R,3R)-2,3-dihydroxy-3-methylpentanoate + NADP(+) = (S)-2-ethyl-2-hydroxy-3-oxobutanoate + NADPH + H(+)</text>
        <dbReference type="Rhea" id="RHEA:13493"/>
        <dbReference type="ChEBI" id="CHEBI:15378"/>
        <dbReference type="ChEBI" id="CHEBI:49256"/>
        <dbReference type="ChEBI" id="CHEBI:49258"/>
        <dbReference type="ChEBI" id="CHEBI:57783"/>
        <dbReference type="ChEBI" id="CHEBI:58349"/>
        <dbReference type="EC" id="1.1.1.86"/>
    </reaction>
</comment>
<comment type="cofactor">
    <cofactor evidence="1">
        <name>Mg(2+)</name>
        <dbReference type="ChEBI" id="CHEBI:18420"/>
    </cofactor>
    <text evidence="1">Binds 2 magnesium ions per subunit.</text>
</comment>
<comment type="pathway">
    <text evidence="1">Amino-acid biosynthesis; L-isoleucine biosynthesis; L-isoleucine from 2-oxobutanoate: step 2/4.</text>
</comment>
<comment type="pathway">
    <text evidence="1">Amino-acid biosynthesis; L-valine biosynthesis; L-valine from pyruvate: step 2/4.</text>
</comment>
<comment type="similarity">
    <text evidence="1">Belongs to the ketol-acid reductoisomerase family.</text>
</comment>
<proteinExistence type="inferred from homology"/>
<name>ILVC_BORPA</name>
<protein>
    <recommendedName>
        <fullName evidence="1">Ketol-acid reductoisomerase (NADP(+))</fullName>
        <shortName evidence="1">KARI</shortName>
        <ecNumber evidence="1">1.1.1.86</ecNumber>
    </recommendedName>
    <alternativeName>
        <fullName evidence="1">Acetohydroxy-acid isomeroreductase</fullName>
        <shortName evidence="1">AHIR</shortName>
    </alternativeName>
    <alternativeName>
        <fullName evidence="1">Alpha-keto-beta-hydroxylacyl reductoisomerase</fullName>
    </alternativeName>
    <alternativeName>
        <fullName evidence="1">Ketol-acid reductoisomerase type 1</fullName>
    </alternativeName>
    <alternativeName>
        <fullName evidence="1">Ketol-acid reductoisomerase type I</fullName>
    </alternativeName>
</protein>
<organism>
    <name type="scientific">Bordetella parapertussis (strain 12822 / ATCC BAA-587 / NCTC 13253)</name>
    <dbReference type="NCBI Taxonomy" id="257311"/>
    <lineage>
        <taxon>Bacteria</taxon>
        <taxon>Pseudomonadati</taxon>
        <taxon>Pseudomonadota</taxon>
        <taxon>Betaproteobacteria</taxon>
        <taxon>Burkholderiales</taxon>
        <taxon>Alcaligenaceae</taxon>
        <taxon>Bordetella</taxon>
    </lineage>
</organism>
<accession>Q7W566</accession>